<reference key="1">
    <citation type="journal article" date="2005" name="J. Bacteriol.">
        <title>Whole-genome sequencing of Staphylococcus haemolyticus uncovers the extreme plasticity of its genome and the evolution of human-colonizing staphylococcal species.</title>
        <authorList>
            <person name="Takeuchi F."/>
            <person name="Watanabe S."/>
            <person name="Baba T."/>
            <person name="Yuzawa H."/>
            <person name="Ito T."/>
            <person name="Morimoto Y."/>
            <person name="Kuroda M."/>
            <person name="Cui L."/>
            <person name="Takahashi M."/>
            <person name="Ankai A."/>
            <person name="Baba S."/>
            <person name="Fukui S."/>
            <person name="Lee J.C."/>
            <person name="Hiramatsu K."/>
        </authorList>
    </citation>
    <scope>NUCLEOTIDE SEQUENCE [LARGE SCALE GENOMIC DNA]</scope>
    <source>
        <strain>JCSC1435</strain>
    </source>
</reference>
<organism>
    <name type="scientific">Staphylococcus haemolyticus (strain JCSC1435)</name>
    <dbReference type="NCBI Taxonomy" id="279808"/>
    <lineage>
        <taxon>Bacteria</taxon>
        <taxon>Bacillati</taxon>
        <taxon>Bacillota</taxon>
        <taxon>Bacilli</taxon>
        <taxon>Bacillales</taxon>
        <taxon>Staphylococcaceae</taxon>
        <taxon>Staphylococcus</taxon>
    </lineage>
</organism>
<gene>
    <name type="primary">vraX</name>
    <name type="ordered locus">SH2413</name>
</gene>
<name>VRAX_STAHJ</name>
<protein>
    <recommendedName>
        <fullName>Protein VraX</fullName>
    </recommendedName>
</protein>
<accession>Q4L3Q5</accession>
<dbReference type="EMBL" id="AP006716">
    <property type="protein sequence ID" value="BAE05722.1"/>
    <property type="molecule type" value="Genomic_DNA"/>
</dbReference>
<dbReference type="RefSeq" id="WP_011276668.1">
    <property type="nucleotide sequence ID" value="NC_007168.1"/>
</dbReference>
<dbReference type="SMR" id="Q4L3Q5"/>
<dbReference type="GeneID" id="74187365"/>
<dbReference type="KEGG" id="sha:SH2413"/>
<dbReference type="eggNOG" id="ENOG502ZFSE">
    <property type="taxonomic scope" value="Bacteria"/>
</dbReference>
<dbReference type="HOGENOM" id="CLU_212227_0_0_9"/>
<dbReference type="Proteomes" id="UP000000543">
    <property type="component" value="Chromosome"/>
</dbReference>
<dbReference type="InterPro" id="IPR035374">
    <property type="entry name" value="VraX"/>
</dbReference>
<dbReference type="Pfam" id="PF17412">
    <property type="entry name" value="VraX"/>
    <property type="match status" value="1"/>
</dbReference>
<feature type="chain" id="PRO_0000065927" description="Protein VraX">
    <location>
        <begin position="1"/>
        <end position="56"/>
    </location>
</feature>
<proteinExistence type="predicted"/>
<sequence length="56" mass="6694">MIIYKQNIENGIPMYEIITKTFKTITVKFDETFNKNEIYKLLSLLENDLDNMKLGY</sequence>